<gene>
    <name type="primary">nanE</name>
    <name type="ordered locus">c3977</name>
</gene>
<reference key="1">
    <citation type="journal article" date="2002" name="Proc. Natl. Acad. Sci. U.S.A.">
        <title>Extensive mosaic structure revealed by the complete genome sequence of uropathogenic Escherichia coli.</title>
        <authorList>
            <person name="Welch R.A."/>
            <person name="Burland V."/>
            <person name="Plunkett G. III"/>
            <person name="Redford P."/>
            <person name="Roesch P."/>
            <person name="Rasko D."/>
            <person name="Buckles E.L."/>
            <person name="Liou S.-R."/>
            <person name="Boutin A."/>
            <person name="Hackett J."/>
            <person name="Stroud D."/>
            <person name="Mayhew G.F."/>
            <person name="Rose D.J."/>
            <person name="Zhou S."/>
            <person name="Schwartz D.C."/>
            <person name="Perna N.T."/>
            <person name="Mobley H.L.T."/>
            <person name="Donnenberg M.S."/>
            <person name="Blattner F.R."/>
        </authorList>
    </citation>
    <scope>NUCLEOTIDE SEQUENCE [LARGE SCALE GENOMIC DNA]</scope>
    <source>
        <strain>CFT073 / ATCC 700928 / UPEC</strain>
    </source>
</reference>
<dbReference type="EC" id="5.1.3.9"/>
<dbReference type="EMBL" id="AE014075">
    <property type="protein sequence ID" value="AAN82417.1"/>
    <property type="status" value="ALT_INIT"/>
    <property type="molecule type" value="Genomic_DNA"/>
</dbReference>
<dbReference type="RefSeq" id="WP_000054239.1">
    <property type="nucleotide sequence ID" value="NZ_CP051263.1"/>
</dbReference>
<dbReference type="SMR" id="P0A762"/>
<dbReference type="STRING" id="199310.c3977"/>
<dbReference type="KEGG" id="ecc:c3977"/>
<dbReference type="eggNOG" id="COG3010">
    <property type="taxonomic scope" value="Bacteria"/>
</dbReference>
<dbReference type="HOGENOM" id="CLU_086300_0_0_6"/>
<dbReference type="UniPathway" id="UPA00629">
    <property type="reaction ID" value="UER00682"/>
</dbReference>
<dbReference type="Proteomes" id="UP000001410">
    <property type="component" value="Chromosome"/>
</dbReference>
<dbReference type="GO" id="GO:0005829">
    <property type="term" value="C:cytosol"/>
    <property type="evidence" value="ECO:0007669"/>
    <property type="project" value="TreeGrafter"/>
</dbReference>
<dbReference type="GO" id="GO:0047465">
    <property type="term" value="F:N-acylglucosamine-6-phosphate 2-epimerase activity"/>
    <property type="evidence" value="ECO:0007669"/>
    <property type="project" value="UniProtKB-EC"/>
</dbReference>
<dbReference type="GO" id="GO:0005975">
    <property type="term" value="P:carbohydrate metabolic process"/>
    <property type="evidence" value="ECO:0007669"/>
    <property type="project" value="UniProtKB-UniRule"/>
</dbReference>
<dbReference type="GO" id="GO:0006053">
    <property type="term" value="P:N-acetylmannosamine catabolic process"/>
    <property type="evidence" value="ECO:0007669"/>
    <property type="project" value="TreeGrafter"/>
</dbReference>
<dbReference type="GO" id="GO:0019262">
    <property type="term" value="P:N-acetylneuraminate catabolic process"/>
    <property type="evidence" value="ECO:0007669"/>
    <property type="project" value="UniProtKB-UniRule"/>
</dbReference>
<dbReference type="CDD" id="cd04729">
    <property type="entry name" value="NanE"/>
    <property type="match status" value="1"/>
</dbReference>
<dbReference type="FunFam" id="3.20.20.70:FF:000035">
    <property type="entry name" value="Putative N-acetylmannosamine-6-phosphate 2-epimerase"/>
    <property type="match status" value="1"/>
</dbReference>
<dbReference type="Gene3D" id="3.20.20.70">
    <property type="entry name" value="Aldolase class I"/>
    <property type="match status" value="1"/>
</dbReference>
<dbReference type="HAMAP" id="MF_01235">
    <property type="entry name" value="ManNAc6P_epimer"/>
    <property type="match status" value="1"/>
</dbReference>
<dbReference type="InterPro" id="IPR013785">
    <property type="entry name" value="Aldolase_TIM"/>
</dbReference>
<dbReference type="InterPro" id="IPR007260">
    <property type="entry name" value="NanE"/>
</dbReference>
<dbReference type="InterPro" id="IPR011060">
    <property type="entry name" value="RibuloseP-bd_barrel"/>
</dbReference>
<dbReference type="NCBIfam" id="NF002231">
    <property type="entry name" value="PRK01130.1"/>
    <property type="match status" value="1"/>
</dbReference>
<dbReference type="PANTHER" id="PTHR36204">
    <property type="entry name" value="N-ACETYLMANNOSAMINE-6-PHOSPHATE 2-EPIMERASE-RELATED"/>
    <property type="match status" value="1"/>
</dbReference>
<dbReference type="PANTHER" id="PTHR36204:SF1">
    <property type="entry name" value="N-ACETYLMANNOSAMINE-6-PHOSPHATE 2-EPIMERASE-RELATED"/>
    <property type="match status" value="1"/>
</dbReference>
<dbReference type="Pfam" id="PF04131">
    <property type="entry name" value="NanE"/>
    <property type="match status" value="1"/>
</dbReference>
<dbReference type="SUPFAM" id="SSF51366">
    <property type="entry name" value="Ribulose-phoshate binding barrel"/>
    <property type="match status" value="1"/>
</dbReference>
<sequence length="229" mass="24074">MSLLAQLDQKIAANGGLIVSCQPVPDSPLDKPEIVAAMALAAEQAGAVAIRIEGVANLQATRAVVSVPIIGIVKRDLEDSPVRITAYIEDVDALAQAGADIIAIDGTDRPRPVPVETLLARIHHHGLLAMTDCSTPEDGLACQKLGAEIIGTTLSGYTTPETPEEPDLALVKTLSDAGCRVIAEGRYNTPAQAADAMRHGAWAVTVGSAITRLEHICQWYNTAMKKAVL</sequence>
<organism>
    <name type="scientific">Escherichia coli O6:H1 (strain CFT073 / ATCC 700928 / UPEC)</name>
    <dbReference type="NCBI Taxonomy" id="199310"/>
    <lineage>
        <taxon>Bacteria</taxon>
        <taxon>Pseudomonadati</taxon>
        <taxon>Pseudomonadota</taxon>
        <taxon>Gammaproteobacteria</taxon>
        <taxon>Enterobacterales</taxon>
        <taxon>Enterobacteriaceae</taxon>
        <taxon>Escherichia</taxon>
    </lineage>
</organism>
<accession>P0A762</accession>
<accession>P45426</accession>
<comment type="function">
    <text evidence="1">Converts N-acetylmannosamine-6-phosphate (ManNAc-6-P) to N-acetylglucosamine-6-phosphate (GlcNAc-6-P).</text>
</comment>
<comment type="catalytic activity">
    <reaction>
        <text>an N-acyl-D-glucosamine 6-phosphate = an N-acyl-D-mannosamine 6-phosphate</text>
        <dbReference type="Rhea" id="RHEA:23932"/>
        <dbReference type="ChEBI" id="CHEBI:57599"/>
        <dbReference type="ChEBI" id="CHEBI:57666"/>
        <dbReference type="EC" id="5.1.3.9"/>
    </reaction>
</comment>
<comment type="pathway">
    <text>Amino-sugar metabolism; N-acetylneuraminate degradation; D-fructose 6-phosphate from N-acetylneuraminate: step 3/5.</text>
</comment>
<comment type="similarity">
    <text evidence="1">Belongs to the NanE family.</text>
</comment>
<comment type="sequence caution" evidence="1">
    <conflict type="erroneous initiation">
        <sequence resource="EMBL-CDS" id="AAN82417"/>
    </conflict>
</comment>
<name>NANE_ECOL6</name>
<keyword id="KW-0119">Carbohydrate metabolism</keyword>
<keyword id="KW-0413">Isomerase</keyword>
<keyword id="KW-1185">Reference proteome</keyword>
<feature type="chain" id="PRO_0000179772" description="Putative N-acetylmannosamine-6-phosphate 2-epimerase">
    <location>
        <begin position="1"/>
        <end position="229"/>
    </location>
</feature>
<evidence type="ECO:0000305" key="1"/>
<protein>
    <recommendedName>
        <fullName>Putative N-acetylmannosamine-6-phosphate 2-epimerase</fullName>
        <ecNumber>5.1.3.9</ecNumber>
    </recommendedName>
    <alternativeName>
        <fullName>ManNAc-6-P epimerase</fullName>
    </alternativeName>
</protein>
<proteinExistence type="inferred from homology"/>